<keyword id="KW-0489">Methyltransferase</keyword>
<keyword id="KW-1185">Reference proteome</keyword>
<keyword id="KW-0808">Transferase</keyword>
<dbReference type="EC" id="2.1.1.103" evidence="4"/>
<dbReference type="EMBL" id="FJ803924">
    <property type="protein sequence ID" value="ACV89824.1"/>
    <property type="molecule type" value="mRNA"/>
</dbReference>
<dbReference type="EMBL" id="CM022217">
    <property type="protein sequence ID" value="KAF7023345.1"/>
    <property type="molecule type" value="Genomic_DNA"/>
</dbReference>
<dbReference type="SMR" id="C8YTM5"/>
<dbReference type="STRING" id="4565.A0A3B6EIE9"/>
<dbReference type="PaxDb" id="4565-Traes_3AL_644FFC911.1"/>
<dbReference type="EnsemblPlants" id="TraesARI3A03G01451400.1">
    <property type="protein sequence ID" value="TraesARI3A03G01451400.1"/>
    <property type="gene ID" value="TraesARI3A03G01451400"/>
</dbReference>
<dbReference type="EnsemblPlants" id="TraesCS3A02G258800.1">
    <property type="protein sequence ID" value="TraesCS3A02G258800.1"/>
    <property type="gene ID" value="TraesCS3A02G258800"/>
</dbReference>
<dbReference type="EnsemblPlants" id="TraesCS3A03G0660800.2">
    <property type="protein sequence ID" value="TraesCS3A03G0660800.2.CDS"/>
    <property type="gene ID" value="TraesCS3A03G0660800"/>
</dbReference>
<dbReference type="EnsemblPlants" id="TraesKAR3A01G0302410.1">
    <property type="protein sequence ID" value="cds.TraesKAR3A01G0302410.1"/>
    <property type="gene ID" value="TraesKAR3A01G0302410"/>
</dbReference>
<dbReference type="EnsemblPlants" id="TraesNOR3A03G01451320.1">
    <property type="protein sequence ID" value="TraesNOR3A03G01451320.1"/>
    <property type="gene ID" value="TraesNOR3A03G01451320"/>
</dbReference>
<dbReference type="EnsemblPlants" id="TraesROB_scaffold_100149_01G000100.1">
    <property type="protein sequence ID" value="TraesROB_scaffold_100149_01G000100.1"/>
    <property type="gene ID" value="TraesROB_scaffold_100149_01G000100"/>
</dbReference>
<dbReference type="EnsemblPlants" id="TraesSYM3A03G01452740.1">
    <property type="protein sequence ID" value="TraesSYM3A03G01452740.1"/>
    <property type="gene ID" value="TraesSYM3A03G01452740"/>
</dbReference>
<dbReference type="EnsemblPlants" id="TraesWEE_scaffold_109834_01G000100.1">
    <property type="protein sequence ID" value="TraesWEE_scaffold_109834_01G000100.1"/>
    <property type="gene ID" value="TraesWEE_scaffold_109834_01G000100"/>
</dbReference>
<dbReference type="Gramene" id="TraesARI3A03G01451400.1">
    <property type="protein sequence ID" value="TraesARI3A03G01451400.1"/>
    <property type="gene ID" value="TraesARI3A03G01451400"/>
</dbReference>
<dbReference type="Gramene" id="TraesCS3A02G258800.1">
    <property type="protein sequence ID" value="TraesCS3A02G258800.1"/>
    <property type="gene ID" value="TraesCS3A02G258800"/>
</dbReference>
<dbReference type="Gramene" id="TraesCS3A03G0660800.2">
    <property type="protein sequence ID" value="TraesCS3A03G0660800.2.CDS"/>
    <property type="gene ID" value="TraesCS3A03G0660800"/>
</dbReference>
<dbReference type="Gramene" id="TraesKAR3A01G0302410.1">
    <property type="protein sequence ID" value="cds.TraesKAR3A01G0302410.1"/>
    <property type="gene ID" value="TraesKAR3A01G0302410"/>
</dbReference>
<dbReference type="Gramene" id="TraesNOR3A03G01451320.1">
    <property type="protein sequence ID" value="TraesNOR3A03G01451320.1"/>
    <property type="gene ID" value="TraesNOR3A03G01451320"/>
</dbReference>
<dbReference type="Gramene" id="TraesROB_scaffold_100149_01G000100.1">
    <property type="protein sequence ID" value="TraesROB_scaffold_100149_01G000100.1"/>
    <property type="gene ID" value="TraesROB_scaffold_100149_01G000100"/>
</dbReference>
<dbReference type="Gramene" id="TraesSYM3A03G01452740.1">
    <property type="protein sequence ID" value="TraesSYM3A03G01452740.1"/>
    <property type="gene ID" value="TraesSYM3A03G01452740"/>
</dbReference>
<dbReference type="Gramene" id="TraesWEE_scaffold_109834_01G000100.1">
    <property type="protein sequence ID" value="TraesWEE_scaffold_109834_01G000100.1"/>
    <property type="gene ID" value="TraesWEE_scaffold_109834_01G000100"/>
</dbReference>
<dbReference type="OMA" id="CIGAYVE"/>
<dbReference type="OrthoDB" id="8300214at2759"/>
<dbReference type="UniPathway" id="UPA00753">
    <property type="reaction ID" value="UER00738"/>
</dbReference>
<dbReference type="Proteomes" id="UP000019116">
    <property type="component" value="Chromosome 3A"/>
</dbReference>
<dbReference type="Proteomes" id="UP000815260">
    <property type="component" value="Chromosome 3A"/>
</dbReference>
<dbReference type="ExpressionAtlas" id="C8YTM5">
    <property type="expression patterns" value="baseline and differential"/>
</dbReference>
<dbReference type="GO" id="GO:0008170">
    <property type="term" value="F:N-methyltransferase activity"/>
    <property type="evidence" value="ECO:0000318"/>
    <property type="project" value="GO_Central"/>
</dbReference>
<dbReference type="GO" id="GO:0000234">
    <property type="term" value="F:phosphoethanolamine N-methyltransferase activity"/>
    <property type="evidence" value="ECO:0007669"/>
    <property type="project" value="UniProtKB-EC"/>
</dbReference>
<dbReference type="GO" id="GO:0032259">
    <property type="term" value="P:methylation"/>
    <property type="evidence" value="ECO:0007669"/>
    <property type="project" value="UniProtKB-KW"/>
</dbReference>
<dbReference type="GO" id="GO:0006656">
    <property type="term" value="P:phosphatidylcholine biosynthetic process"/>
    <property type="evidence" value="ECO:0000318"/>
    <property type="project" value="GO_Central"/>
</dbReference>
<dbReference type="CDD" id="cd02440">
    <property type="entry name" value="AdoMet_MTases"/>
    <property type="match status" value="2"/>
</dbReference>
<dbReference type="Gene3D" id="3.40.50.150">
    <property type="entry name" value="Vaccinia Virus protein VP39"/>
    <property type="match status" value="2"/>
</dbReference>
<dbReference type="InterPro" id="IPR025714">
    <property type="entry name" value="Methyltranfer_dom"/>
</dbReference>
<dbReference type="InterPro" id="IPR041698">
    <property type="entry name" value="Methyltransf_25"/>
</dbReference>
<dbReference type="InterPro" id="IPR025771">
    <property type="entry name" value="Phosphoethanolamine_N-MeTrfase"/>
</dbReference>
<dbReference type="InterPro" id="IPR029063">
    <property type="entry name" value="SAM-dependent_MTases_sf"/>
</dbReference>
<dbReference type="PANTHER" id="PTHR44307">
    <property type="entry name" value="PHOSPHOETHANOLAMINE METHYLTRANSFERASE"/>
    <property type="match status" value="1"/>
</dbReference>
<dbReference type="PANTHER" id="PTHR44307:SF2">
    <property type="entry name" value="PHOSPHOETHANOLAMINE METHYLTRANSFERASE ISOFORM X1"/>
    <property type="match status" value="1"/>
</dbReference>
<dbReference type="Pfam" id="PF13649">
    <property type="entry name" value="Methyltransf_25"/>
    <property type="match status" value="1"/>
</dbReference>
<dbReference type="Pfam" id="PF13847">
    <property type="entry name" value="Methyltransf_31"/>
    <property type="match status" value="1"/>
</dbReference>
<dbReference type="SUPFAM" id="SSF53335">
    <property type="entry name" value="S-adenosyl-L-methionine-dependent methyltransferases"/>
    <property type="match status" value="2"/>
</dbReference>
<dbReference type="PROSITE" id="PS51582">
    <property type="entry name" value="SAM_PEAMT"/>
    <property type="match status" value="1"/>
</dbReference>
<reference key="1">
    <citation type="journal article" date="2009" name="J. Biol. Chem.">
        <title>Biochemical characterization of two wheat phosphoethanolamine N-methyltransferase isoforms with different sensitivities to inhibition by phosphatidic acid.</title>
        <authorList>
            <person name="Jost R."/>
            <person name="Berkowitz O."/>
            <person name="Shaw J."/>
            <person name="Masle J."/>
        </authorList>
    </citation>
    <scope>NUCLEOTIDE SEQUENCE [MRNA]</scope>
    <scope>FUNCTION</scope>
    <scope>CATALYTIC ACTIVITY</scope>
    <scope>ACTIVITY REGULATION</scope>
    <scope>BIOPHYSICOCHEMICAL PROPERTIES</scope>
</reference>
<reference key="2">
    <citation type="journal article" date="2018" name="Science">
        <title>Shifting the limits in wheat research and breeding using a fully annotated reference genome.</title>
        <authorList>
            <consortium name="International wheat genome sequencing consortium (IWGSC)"/>
        </authorList>
    </citation>
    <scope>NUCLEOTIDE SEQUENCE [LARGE SCALE GENOMIC DNA]</scope>
    <source>
        <strain>cv. Chinese Spring</strain>
    </source>
</reference>
<proteinExistence type="evidence at protein level"/>
<evidence type="ECO:0000250" key="1">
    <source>
        <dbReference type="UniProtKB" id="Q22993"/>
    </source>
</evidence>
<evidence type="ECO:0000250" key="2">
    <source>
        <dbReference type="UniProtKB" id="Q9FR44"/>
    </source>
</evidence>
<evidence type="ECO:0000255" key="3">
    <source>
        <dbReference type="PROSITE-ProRule" id="PRU00915"/>
    </source>
</evidence>
<evidence type="ECO:0000269" key="4">
    <source>
    </source>
</evidence>
<evidence type="ECO:0000303" key="5">
    <source>
    </source>
</evidence>
<evidence type="ECO:0000305" key="6"/>
<protein>
    <recommendedName>
        <fullName evidence="5">Phosphoethanolamine N-methyltransferase</fullName>
        <shortName evidence="5">TaPEAMT2</shortName>
        <ecNumber evidence="4">2.1.1.103</ecNumber>
    </recommendedName>
</protein>
<gene>
    <name evidence="5" type="primary">PEAMT2</name>
</gene>
<feature type="chain" id="PRO_0000458648" description="Phosphoethanolamine N-methyltransferase">
    <location>
        <begin position="1"/>
        <end position="505"/>
    </location>
</feature>
<feature type="binding site" evidence="2">
    <location>
        <position position="76"/>
    </location>
    <ligand>
        <name>S-adenosyl-L-homocysteine</name>
        <dbReference type="ChEBI" id="CHEBI:57856"/>
    </ligand>
</feature>
<feature type="binding site" evidence="2">
    <location>
        <position position="81"/>
    </location>
    <ligand>
        <name>S-adenosyl-L-homocysteine</name>
        <dbReference type="ChEBI" id="CHEBI:57856"/>
    </ligand>
</feature>
<feature type="binding site" evidence="2">
    <location>
        <position position="97"/>
    </location>
    <ligand>
        <name>S-adenosyl-L-homocysteine</name>
        <dbReference type="ChEBI" id="CHEBI:57856"/>
    </ligand>
</feature>
<feature type="binding site" evidence="2">
    <location>
        <position position="122"/>
    </location>
    <ligand>
        <name>S-adenosyl-L-homocysteine</name>
        <dbReference type="ChEBI" id="CHEBI:57856"/>
    </ligand>
</feature>
<feature type="binding site" evidence="2">
    <location>
        <position position="123"/>
    </location>
    <ligand>
        <name>S-adenosyl-L-homocysteine</name>
        <dbReference type="ChEBI" id="CHEBI:57856"/>
    </ligand>
</feature>
<feature type="binding site" evidence="2">
    <location>
        <position position="141"/>
    </location>
    <ligand>
        <name>S-adenosyl-L-homocysteine</name>
        <dbReference type="ChEBI" id="CHEBI:57856"/>
    </ligand>
</feature>
<feature type="binding site" evidence="2">
    <location>
        <position position="174"/>
    </location>
    <ligand>
        <name>phosphocholine</name>
        <dbReference type="ChEBI" id="CHEBI:295975"/>
    </ligand>
</feature>
<feature type="binding site" evidence="2">
    <location>
        <position position="179"/>
    </location>
    <ligand>
        <name>phosphocholine</name>
        <dbReference type="ChEBI" id="CHEBI:295975"/>
    </ligand>
</feature>
<feature type="binding site" evidence="2">
    <location>
        <position position="180"/>
    </location>
    <ligand>
        <name>phosphocholine</name>
        <dbReference type="ChEBI" id="CHEBI:295975"/>
    </ligand>
</feature>
<feature type="binding site" evidence="2">
    <location>
        <position position="184"/>
    </location>
    <ligand>
        <name>phosphocholine</name>
        <dbReference type="ChEBI" id="CHEBI:295975"/>
    </ligand>
</feature>
<feature type="binding site" evidence="2">
    <location>
        <position position="191"/>
    </location>
    <ligand>
        <name>phosphocholine</name>
        <dbReference type="ChEBI" id="CHEBI:295975"/>
    </ligand>
</feature>
<feature type="binding site" evidence="1">
    <location>
        <begin position="260"/>
        <end position="261"/>
    </location>
    <ligand>
        <name>N-methylethanolamine phosphate</name>
        <dbReference type="ChEBI" id="CHEBI:57781"/>
    </ligand>
</feature>
<feature type="binding site" evidence="1">
    <location>
        <position position="269"/>
    </location>
    <ligand>
        <name>N-methylethanolamine phosphate</name>
        <dbReference type="ChEBI" id="CHEBI:57781"/>
    </ligand>
</feature>
<feature type="binding site" evidence="2">
    <location>
        <position position="269"/>
    </location>
    <ligand>
        <name>phosphocholine</name>
        <dbReference type="ChEBI" id="CHEBI:295975"/>
    </ligand>
</feature>
<feature type="binding site" evidence="2">
    <location>
        <position position="278"/>
    </location>
    <ligand>
        <name>S-adenosyl-L-homocysteine</name>
        <dbReference type="ChEBI" id="CHEBI:57856"/>
    </ligand>
</feature>
<feature type="binding site" evidence="2">
    <location>
        <position position="279"/>
    </location>
    <ligand>
        <name>S-adenosyl-L-homocysteine</name>
        <dbReference type="ChEBI" id="CHEBI:57856"/>
    </ligand>
</feature>
<feature type="binding site" evidence="2">
    <location>
        <position position="305"/>
    </location>
    <ligand>
        <name>S-adenosyl-L-homocysteine</name>
        <dbReference type="ChEBI" id="CHEBI:57856"/>
    </ligand>
</feature>
<feature type="binding site" evidence="2">
    <location>
        <position position="327"/>
    </location>
    <ligand>
        <name>S-adenosyl-L-homocysteine</name>
        <dbReference type="ChEBI" id="CHEBI:57856"/>
    </ligand>
</feature>
<feature type="binding site" evidence="2">
    <location>
        <position position="353"/>
    </location>
    <ligand>
        <name>S-adenosyl-L-homocysteine</name>
        <dbReference type="ChEBI" id="CHEBI:57856"/>
    </ligand>
</feature>
<feature type="binding site" evidence="2">
    <location>
        <position position="354"/>
    </location>
    <ligand>
        <name>S-adenosyl-L-homocysteine</name>
        <dbReference type="ChEBI" id="CHEBI:57856"/>
    </ligand>
</feature>
<feature type="binding site" evidence="1">
    <location>
        <position position="370"/>
    </location>
    <ligand>
        <name>S-adenosyl-L-homocysteine</name>
        <dbReference type="ChEBI" id="CHEBI:57856"/>
    </ligand>
</feature>
<feature type="binding site" evidence="1">
    <location>
        <position position="401"/>
    </location>
    <ligand>
        <name>N-methylethanolamine phosphate</name>
        <dbReference type="ChEBI" id="CHEBI:57781"/>
    </ligand>
</feature>
<feature type="binding site" evidence="2">
    <location>
        <position position="401"/>
    </location>
    <ligand>
        <name>phosphocholine</name>
        <dbReference type="ChEBI" id="CHEBI:295975"/>
    </ligand>
</feature>
<feature type="binding site" evidence="1">
    <location>
        <position position="415"/>
    </location>
    <ligand>
        <name>N-methylethanolamine phosphate</name>
        <dbReference type="ChEBI" id="CHEBI:57781"/>
    </ligand>
</feature>
<feature type="binding site" evidence="2">
    <location>
        <position position="415"/>
    </location>
    <ligand>
        <name>phosphocholine</name>
        <dbReference type="ChEBI" id="CHEBI:295975"/>
    </ligand>
</feature>
<feature type="binding site" evidence="1">
    <location>
        <begin position="419"/>
        <end position="421"/>
    </location>
    <ligand>
        <name>N-methylethanolamine phosphate</name>
        <dbReference type="ChEBI" id="CHEBI:57781"/>
    </ligand>
</feature>
<feature type="binding site" evidence="2">
    <location>
        <position position="419"/>
    </location>
    <ligand>
        <name>phosphocholine</name>
        <dbReference type="ChEBI" id="CHEBI:295975"/>
    </ligand>
</feature>
<feature type="binding site" evidence="2">
    <location>
        <position position="421"/>
    </location>
    <ligand>
        <name>phosphocholine</name>
        <dbReference type="ChEBI" id="CHEBI:295975"/>
    </ligand>
</feature>
<feature type="binding site" evidence="1">
    <location>
        <position position="487"/>
    </location>
    <ligand>
        <name>N-methylethanolamine phosphate</name>
        <dbReference type="ChEBI" id="CHEBI:57781"/>
    </ligand>
</feature>
<feature type="binding site" evidence="2">
    <location>
        <position position="487"/>
    </location>
    <ligand>
        <name>phosphocholine</name>
        <dbReference type="ChEBI" id="CHEBI:295975"/>
    </ligand>
</feature>
<feature type="sequence conflict" description="In Ref. 1; ACV89824." evidence="6" ref="1">
    <original>N</original>
    <variation>S</variation>
    <location>
        <position position="212"/>
    </location>
</feature>
<feature type="sequence conflict" description="In Ref. 1; ACV89824." evidence="6" ref="1">
    <original>D</original>
    <variation>G</variation>
    <location>
        <position position="251"/>
    </location>
</feature>
<feature type="sequence conflict" description="In Ref. 1; ACV89824." evidence="6" ref="1">
    <original>I</original>
    <variation>T</variation>
    <location>
        <position position="263"/>
    </location>
</feature>
<feature type="sequence conflict" description="In Ref. 1; ACV89824." evidence="6" ref="1">
    <original>C</original>
    <variation>R</variation>
    <location>
        <position position="268"/>
    </location>
</feature>
<name>PEAM2_WHEAT</name>
<accession>C8YTM5</accession>
<accession>A0A3B6EIE9</accession>
<sequence>MDASAAAAAEIAANGVLAKLEEEREAQKRYWEEHSRDLTVEAMMLDSRAADLDKEERPEILSLLPSYEGKSVLELGAGIGRFTGELAKTAGHVLAMDFIESVIKKNESINGHYKNASFMCADVTSPDLVIEDNSIDLIFSNWLLMYLSDAEVEKLVERMVKWLKVGGHIFFRESCFHQSGDSKRKVNPTHYREPRFYTKVFKEGHAIDQSGNSSELSLLTCKCVGAYVKNKKNQNQICWLWQKVNSTEDRDFQRFLDNVQYKISGILCYERVFGQGFVSTGGIETTKEFVDLLDLKPGQKVLDVGCGIGGGDFYMAENYDVHVVGIDLSINMVSFALEHAIGRKCAVEFEVADCTTKTYPDNTFDVIYSRDTILHIQDKPALFRSFFKWLKPGGKVLISDYCRSPGKPSEEFAAYIKQRGYDLHNVETYGQMLQNAGFHDVVAEDRTDQFLKVLQRELAEVEKNKDEFLADFGQEDYDDIVTGWNAKLQRSSAGEQRWGLFIGTK</sequence>
<comment type="function">
    <text evidence="4">Involved in phosphocholine biosynthesis (PubMed:19762471). Catalyzes the N-methylation of phosphoethanolamine, phosphomonomethylethanolamine and phosphodimethylethanolamine, the three methylation steps required to convert phosphoethanolamine to phosphocholine (PC) (PubMed:19762471).</text>
</comment>
<comment type="catalytic activity">
    <reaction evidence="4">
        <text>phosphoethanolamine + S-adenosyl-L-methionine = N-methylethanolamine phosphate + S-adenosyl-L-homocysteine + H(+)</text>
        <dbReference type="Rhea" id="RHEA:20365"/>
        <dbReference type="ChEBI" id="CHEBI:15378"/>
        <dbReference type="ChEBI" id="CHEBI:57781"/>
        <dbReference type="ChEBI" id="CHEBI:57856"/>
        <dbReference type="ChEBI" id="CHEBI:58190"/>
        <dbReference type="ChEBI" id="CHEBI:59789"/>
        <dbReference type="EC" id="2.1.1.103"/>
    </reaction>
    <physiologicalReaction direction="left-to-right" evidence="4">
        <dbReference type="Rhea" id="RHEA:20366"/>
    </physiologicalReaction>
</comment>
<comment type="catalytic activity">
    <reaction evidence="4">
        <text>N-methylethanolamine phosphate + S-adenosyl-L-methionine = N,N-dimethylethanolamine phosphate + S-adenosyl-L-homocysteine + H(+)</text>
        <dbReference type="Rhea" id="RHEA:25321"/>
        <dbReference type="ChEBI" id="CHEBI:15378"/>
        <dbReference type="ChEBI" id="CHEBI:57781"/>
        <dbReference type="ChEBI" id="CHEBI:57856"/>
        <dbReference type="ChEBI" id="CHEBI:58641"/>
        <dbReference type="ChEBI" id="CHEBI:59789"/>
        <dbReference type="EC" id="2.1.1.103"/>
    </reaction>
    <physiologicalReaction direction="left-to-right" evidence="4">
        <dbReference type="Rhea" id="RHEA:25322"/>
    </physiologicalReaction>
</comment>
<comment type="catalytic activity">
    <reaction evidence="4">
        <text>N,N-dimethylethanolamine phosphate + S-adenosyl-L-methionine = phosphocholine + S-adenosyl-L-homocysteine + H(+)</text>
        <dbReference type="Rhea" id="RHEA:25325"/>
        <dbReference type="ChEBI" id="CHEBI:15378"/>
        <dbReference type="ChEBI" id="CHEBI:57856"/>
        <dbReference type="ChEBI" id="CHEBI:58641"/>
        <dbReference type="ChEBI" id="CHEBI:59789"/>
        <dbReference type="ChEBI" id="CHEBI:295975"/>
        <dbReference type="EC" id="2.1.1.103"/>
    </reaction>
    <physiologicalReaction direction="left-to-right" evidence="4">
        <dbReference type="Rhea" id="RHEA:25326"/>
    </physiologicalReaction>
</comment>
<comment type="activity regulation">
    <text evidence="4">Inhibited by phosphatidic acid.</text>
</comment>
<comment type="biophysicochemical properties">
    <kinetics>
        <KM evidence="4">185 uM for phosphoethanolamine</KM>
        <KM evidence="4">1060 uM for S-adenosyl-L-methionine</KM>
        <Vmax evidence="4">1351.0 nmol/min/mg enzyme with phosphoethanolamine as substrate</Vmax>
    </kinetics>
</comment>
<comment type="pathway">
    <text evidence="6">Phospholipid metabolism; phosphatidylcholine biosynthesis; phosphocholine from phosphoethanolamine: step 1/1.</text>
</comment>
<comment type="similarity">
    <text evidence="3">Belongs to the class I-like SAM-binding methyltransferase superfamily. PEAMT family.</text>
</comment>
<organism>
    <name type="scientific">Triticum aestivum</name>
    <name type="common">Wheat</name>
    <dbReference type="NCBI Taxonomy" id="4565"/>
    <lineage>
        <taxon>Eukaryota</taxon>
        <taxon>Viridiplantae</taxon>
        <taxon>Streptophyta</taxon>
        <taxon>Embryophyta</taxon>
        <taxon>Tracheophyta</taxon>
        <taxon>Spermatophyta</taxon>
        <taxon>Magnoliopsida</taxon>
        <taxon>Liliopsida</taxon>
        <taxon>Poales</taxon>
        <taxon>Poaceae</taxon>
        <taxon>BOP clade</taxon>
        <taxon>Pooideae</taxon>
        <taxon>Triticodae</taxon>
        <taxon>Triticeae</taxon>
        <taxon>Triticinae</taxon>
        <taxon>Triticum</taxon>
    </lineage>
</organism>